<accession>Q9RTY5</accession>
<evidence type="ECO:0000250" key="1"/>
<evidence type="ECO:0000256" key="2">
    <source>
        <dbReference type="SAM" id="MobiDB-lite"/>
    </source>
</evidence>
<evidence type="ECO:0000305" key="3"/>
<gene>
    <name type="primary">leuD1</name>
    <name type="ordered locus">DR_1614</name>
</gene>
<organism>
    <name type="scientific">Deinococcus radiodurans (strain ATCC 13939 / DSM 20539 / JCM 16871 / CCUG 27074 / LMG 4051 / NBRC 15346 / NCIMB 9279 / VKM B-1422 / R1)</name>
    <dbReference type="NCBI Taxonomy" id="243230"/>
    <lineage>
        <taxon>Bacteria</taxon>
        <taxon>Thermotogati</taxon>
        <taxon>Deinococcota</taxon>
        <taxon>Deinococci</taxon>
        <taxon>Deinococcales</taxon>
        <taxon>Deinococcaceae</taxon>
        <taxon>Deinococcus</taxon>
    </lineage>
</organism>
<dbReference type="EC" id="4.2.1.33"/>
<dbReference type="EMBL" id="AE000513">
    <property type="protein sequence ID" value="AAF11175.1"/>
    <property type="molecule type" value="Genomic_DNA"/>
</dbReference>
<dbReference type="PIR" id="H75373">
    <property type="entry name" value="H75373"/>
</dbReference>
<dbReference type="RefSeq" id="NP_295337.1">
    <property type="nucleotide sequence ID" value="NC_001263.1"/>
</dbReference>
<dbReference type="RefSeq" id="WP_010888252.1">
    <property type="nucleotide sequence ID" value="NC_001263.1"/>
</dbReference>
<dbReference type="SMR" id="Q9RTY5"/>
<dbReference type="STRING" id="243230.DR_1614"/>
<dbReference type="PaxDb" id="243230-DR_1614"/>
<dbReference type="EnsemblBacteria" id="AAF11175">
    <property type="protein sequence ID" value="AAF11175"/>
    <property type="gene ID" value="DR_1614"/>
</dbReference>
<dbReference type="GeneID" id="69517850"/>
<dbReference type="KEGG" id="dra:DR_1614"/>
<dbReference type="PATRIC" id="fig|243230.17.peg.1819"/>
<dbReference type="eggNOG" id="COG0066">
    <property type="taxonomic scope" value="Bacteria"/>
</dbReference>
<dbReference type="HOGENOM" id="CLU_081378_1_1_0"/>
<dbReference type="InParanoid" id="Q9RTY5"/>
<dbReference type="OrthoDB" id="9777465at2"/>
<dbReference type="UniPathway" id="UPA00048">
    <property type="reaction ID" value="UER00071"/>
</dbReference>
<dbReference type="Proteomes" id="UP000002524">
    <property type="component" value="Chromosome 1"/>
</dbReference>
<dbReference type="GO" id="GO:0003861">
    <property type="term" value="F:3-isopropylmalate dehydratase activity"/>
    <property type="evidence" value="ECO:0007669"/>
    <property type="project" value="UniProtKB-UniRule"/>
</dbReference>
<dbReference type="GO" id="GO:0009098">
    <property type="term" value="P:L-leucine biosynthetic process"/>
    <property type="evidence" value="ECO:0007669"/>
    <property type="project" value="UniProtKB-UniRule"/>
</dbReference>
<dbReference type="Gene3D" id="3.20.19.10">
    <property type="entry name" value="Aconitase, domain 4"/>
    <property type="match status" value="1"/>
</dbReference>
<dbReference type="HAMAP" id="MF_01032">
    <property type="entry name" value="LeuD_type2"/>
    <property type="match status" value="1"/>
</dbReference>
<dbReference type="InterPro" id="IPR015928">
    <property type="entry name" value="Aconitase/3IPM_dehydase_swvl"/>
</dbReference>
<dbReference type="InterPro" id="IPR000573">
    <property type="entry name" value="AconitaseA/IPMdHydase_ssu_swvl"/>
</dbReference>
<dbReference type="InterPro" id="IPR050075">
    <property type="entry name" value="LeuD"/>
</dbReference>
<dbReference type="InterPro" id="IPR011827">
    <property type="entry name" value="LeuD_type2/HacB/DmdB"/>
</dbReference>
<dbReference type="NCBIfam" id="TIGR02087">
    <property type="entry name" value="LEUD_arch"/>
    <property type="match status" value="1"/>
</dbReference>
<dbReference type="NCBIfam" id="NF010629">
    <property type="entry name" value="PRK14023.1"/>
    <property type="match status" value="1"/>
</dbReference>
<dbReference type="PANTHER" id="PTHR43345:SF10">
    <property type="entry name" value="3-ISOPROPYLMALATE DEHYDRATASE SMALL SUBUNIT 1"/>
    <property type="match status" value="1"/>
</dbReference>
<dbReference type="PANTHER" id="PTHR43345">
    <property type="entry name" value="3-ISOPROPYLMALATE DEHYDRATASE SMALL SUBUNIT 2-RELATED-RELATED"/>
    <property type="match status" value="1"/>
</dbReference>
<dbReference type="Pfam" id="PF00694">
    <property type="entry name" value="Aconitase_C"/>
    <property type="match status" value="1"/>
</dbReference>
<dbReference type="SUPFAM" id="SSF52016">
    <property type="entry name" value="LeuD/IlvD-like"/>
    <property type="match status" value="1"/>
</dbReference>
<feature type="chain" id="PRO_0000141923" description="3-isopropylmalate dehydratase small subunit 1">
    <location>
        <begin position="1"/>
        <end position="177"/>
    </location>
</feature>
<feature type="region of interest" description="Disordered" evidence="2">
    <location>
        <begin position="157"/>
        <end position="177"/>
    </location>
</feature>
<feature type="compositionally biased region" description="Low complexity" evidence="2">
    <location>
        <begin position="162"/>
        <end position="177"/>
    </location>
</feature>
<name>LEUD1_DEIRA</name>
<keyword id="KW-0028">Amino-acid biosynthesis</keyword>
<keyword id="KW-0100">Branched-chain amino acid biosynthesis</keyword>
<keyword id="KW-0432">Leucine biosynthesis</keyword>
<keyword id="KW-0456">Lyase</keyword>
<keyword id="KW-1185">Reference proteome</keyword>
<proteinExistence type="inferred from homology"/>
<sequence length="177" mass="19440">MPRIWKFGDSVNTDDILPGKFAPFMAGEDVFQTFAFHYVRPEFAAQVQPGDVLIGGRNWGLGSSREYAPQALKKLHIGGIVAPSFARIHYRNLLNLGIPAFEYDLTELLEDGDEVTLDAQTGLLTYADGTVQLPPPPEFLREALKEGSILEFFKKHGRFPGEEPGAEASTETASAAE</sequence>
<protein>
    <recommendedName>
        <fullName>3-isopropylmalate dehydratase small subunit 1</fullName>
        <ecNumber>4.2.1.33</ecNumber>
    </recommendedName>
    <alternativeName>
        <fullName>Alpha-IPM isomerase 1</fullName>
        <shortName>IPMI 1</shortName>
    </alternativeName>
    <alternativeName>
        <fullName>Isopropylmalate isomerase 1</fullName>
    </alternativeName>
</protein>
<reference key="1">
    <citation type="journal article" date="1999" name="Science">
        <title>Genome sequence of the radioresistant bacterium Deinococcus radiodurans R1.</title>
        <authorList>
            <person name="White O."/>
            <person name="Eisen J.A."/>
            <person name="Heidelberg J.F."/>
            <person name="Hickey E.K."/>
            <person name="Peterson J.D."/>
            <person name="Dodson R.J."/>
            <person name="Haft D.H."/>
            <person name="Gwinn M.L."/>
            <person name="Nelson W.C."/>
            <person name="Richardson D.L."/>
            <person name="Moffat K.S."/>
            <person name="Qin H."/>
            <person name="Jiang L."/>
            <person name="Pamphile W."/>
            <person name="Crosby M."/>
            <person name="Shen M."/>
            <person name="Vamathevan J.J."/>
            <person name="Lam P."/>
            <person name="McDonald L.A."/>
            <person name="Utterback T.R."/>
            <person name="Zalewski C."/>
            <person name="Makarova K.S."/>
            <person name="Aravind L."/>
            <person name="Daly M.J."/>
            <person name="Minton K.W."/>
            <person name="Fleischmann R.D."/>
            <person name="Ketchum K.A."/>
            <person name="Nelson K.E."/>
            <person name="Salzberg S.L."/>
            <person name="Smith H.O."/>
            <person name="Venter J.C."/>
            <person name="Fraser C.M."/>
        </authorList>
    </citation>
    <scope>NUCLEOTIDE SEQUENCE [LARGE SCALE GENOMIC DNA]</scope>
    <source>
        <strain>ATCC 13939 / DSM 20539 / JCM 16871 / CCUG 27074 / LMG 4051 / NBRC 15346 / NCIMB 9279 / VKM B-1422 / R1</strain>
    </source>
</reference>
<comment type="function">
    <text evidence="1">Catalyzes the isomerization between 2-isopropylmalate and 3-isopropylmalate, via the formation of 2-isopropylmaleate.</text>
</comment>
<comment type="catalytic activity">
    <reaction>
        <text>(2R,3S)-3-isopropylmalate = (2S)-2-isopropylmalate</text>
        <dbReference type="Rhea" id="RHEA:32287"/>
        <dbReference type="ChEBI" id="CHEBI:1178"/>
        <dbReference type="ChEBI" id="CHEBI:35121"/>
        <dbReference type="EC" id="4.2.1.33"/>
    </reaction>
</comment>
<comment type="pathway">
    <text>Amino-acid biosynthesis; L-leucine biosynthesis; L-leucine from 3-methyl-2-oxobutanoate: step 2/4.</text>
</comment>
<comment type="subunit">
    <text evidence="1">Heterodimer of LeuC and LeuD.</text>
</comment>
<comment type="similarity">
    <text evidence="3">Belongs to the LeuD family. LeuD type 2 subfamily.</text>
</comment>